<feature type="chain" id="PRO_0000306744" description="Small ribosomal subunit protein uS13">
    <location>
        <begin position="1"/>
        <end position="118"/>
    </location>
</feature>
<feature type="region of interest" description="Disordered" evidence="2">
    <location>
        <begin position="94"/>
        <end position="118"/>
    </location>
</feature>
<evidence type="ECO:0000255" key="1">
    <source>
        <dbReference type="HAMAP-Rule" id="MF_01315"/>
    </source>
</evidence>
<evidence type="ECO:0000256" key="2">
    <source>
        <dbReference type="SAM" id="MobiDB-lite"/>
    </source>
</evidence>
<evidence type="ECO:0000305" key="3"/>
<sequence length="118" mass="13375">MARIAGVNLPAQKHVWVGLQSIYGIGRTRSKKLCESAGVTSTTKIRDLSEPEIERLRAEVGKYVVEGDLRREIGIAIKRLMDLGCYRGLRHRRGLPLRGQRTRTNARTRKGPRKAIRK</sequence>
<protein>
    <recommendedName>
        <fullName evidence="1">Small ribosomal subunit protein uS13</fullName>
    </recommendedName>
    <alternativeName>
        <fullName evidence="3">30S ribosomal protein S13</fullName>
    </alternativeName>
</protein>
<proteinExistence type="inferred from homology"/>
<dbReference type="EMBL" id="AP008229">
    <property type="protein sequence ID" value="BAE70121.1"/>
    <property type="molecule type" value="Genomic_DNA"/>
</dbReference>
<dbReference type="RefSeq" id="WP_003486672.1">
    <property type="nucleotide sequence ID" value="NC_007705.1"/>
</dbReference>
<dbReference type="SMR" id="Q2P006"/>
<dbReference type="GeneID" id="97509357"/>
<dbReference type="KEGG" id="xom:XOO3366"/>
<dbReference type="HOGENOM" id="CLU_103849_1_2_6"/>
<dbReference type="GO" id="GO:0005829">
    <property type="term" value="C:cytosol"/>
    <property type="evidence" value="ECO:0007669"/>
    <property type="project" value="TreeGrafter"/>
</dbReference>
<dbReference type="GO" id="GO:0015935">
    <property type="term" value="C:small ribosomal subunit"/>
    <property type="evidence" value="ECO:0007669"/>
    <property type="project" value="TreeGrafter"/>
</dbReference>
<dbReference type="GO" id="GO:0019843">
    <property type="term" value="F:rRNA binding"/>
    <property type="evidence" value="ECO:0007669"/>
    <property type="project" value="UniProtKB-UniRule"/>
</dbReference>
<dbReference type="GO" id="GO:0003735">
    <property type="term" value="F:structural constituent of ribosome"/>
    <property type="evidence" value="ECO:0007669"/>
    <property type="project" value="InterPro"/>
</dbReference>
<dbReference type="GO" id="GO:0000049">
    <property type="term" value="F:tRNA binding"/>
    <property type="evidence" value="ECO:0007669"/>
    <property type="project" value="UniProtKB-UniRule"/>
</dbReference>
<dbReference type="GO" id="GO:0006412">
    <property type="term" value="P:translation"/>
    <property type="evidence" value="ECO:0007669"/>
    <property type="project" value="UniProtKB-UniRule"/>
</dbReference>
<dbReference type="FunFam" id="1.10.8.50:FF:000001">
    <property type="entry name" value="30S ribosomal protein S13"/>
    <property type="match status" value="1"/>
</dbReference>
<dbReference type="FunFam" id="4.10.910.10:FF:000001">
    <property type="entry name" value="30S ribosomal protein S13"/>
    <property type="match status" value="1"/>
</dbReference>
<dbReference type="Gene3D" id="1.10.8.50">
    <property type="match status" value="1"/>
</dbReference>
<dbReference type="Gene3D" id="4.10.910.10">
    <property type="entry name" value="30s ribosomal protein s13, domain 2"/>
    <property type="match status" value="1"/>
</dbReference>
<dbReference type="HAMAP" id="MF_01315">
    <property type="entry name" value="Ribosomal_uS13"/>
    <property type="match status" value="1"/>
</dbReference>
<dbReference type="InterPro" id="IPR027437">
    <property type="entry name" value="Rbsml_uS13_C"/>
</dbReference>
<dbReference type="InterPro" id="IPR001892">
    <property type="entry name" value="Ribosomal_uS13"/>
</dbReference>
<dbReference type="InterPro" id="IPR010979">
    <property type="entry name" value="Ribosomal_uS13-like_H2TH"/>
</dbReference>
<dbReference type="InterPro" id="IPR019980">
    <property type="entry name" value="Ribosomal_uS13_bac-type"/>
</dbReference>
<dbReference type="InterPro" id="IPR018269">
    <property type="entry name" value="Ribosomal_uS13_CS"/>
</dbReference>
<dbReference type="NCBIfam" id="TIGR03631">
    <property type="entry name" value="uS13_bact"/>
    <property type="match status" value="1"/>
</dbReference>
<dbReference type="PANTHER" id="PTHR10871">
    <property type="entry name" value="30S RIBOSOMAL PROTEIN S13/40S RIBOSOMAL PROTEIN S18"/>
    <property type="match status" value="1"/>
</dbReference>
<dbReference type="PANTHER" id="PTHR10871:SF1">
    <property type="entry name" value="SMALL RIBOSOMAL SUBUNIT PROTEIN US13M"/>
    <property type="match status" value="1"/>
</dbReference>
<dbReference type="Pfam" id="PF00416">
    <property type="entry name" value="Ribosomal_S13"/>
    <property type="match status" value="1"/>
</dbReference>
<dbReference type="PIRSF" id="PIRSF002134">
    <property type="entry name" value="Ribosomal_S13"/>
    <property type="match status" value="1"/>
</dbReference>
<dbReference type="SUPFAM" id="SSF46946">
    <property type="entry name" value="S13-like H2TH domain"/>
    <property type="match status" value="1"/>
</dbReference>
<dbReference type="PROSITE" id="PS00646">
    <property type="entry name" value="RIBOSOMAL_S13_1"/>
    <property type="match status" value="1"/>
</dbReference>
<dbReference type="PROSITE" id="PS50159">
    <property type="entry name" value="RIBOSOMAL_S13_2"/>
    <property type="match status" value="1"/>
</dbReference>
<reference key="1">
    <citation type="journal article" date="2005" name="Jpn. Agric. Res. Q.">
        <title>Genome sequence of Xanthomonas oryzae pv. oryzae suggests contribution of large numbers of effector genes and insertion sequences to its race diversity.</title>
        <authorList>
            <person name="Ochiai H."/>
            <person name="Inoue Y."/>
            <person name="Takeya M."/>
            <person name="Sasaki A."/>
            <person name="Kaku H."/>
        </authorList>
    </citation>
    <scope>NUCLEOTIDE SEQUENCE [LARGE SCALE GENOMIC DNA]</scope>
    <source>
        <strain>MAFF 311018</strain>
    </source>
</reference>
<gene>
    <name evidence="1" type="primary">rpsM</name>
    <name type="ordered locus">XOO3366</name>
</gene>
<name>RS13_XANOM</name>
<comment type="function">
    <text evidence="1">Located at the top of the head of the 30S subunit, it contacts several helices of the 16S rRNA. In the 70S ribosome it contacts the 23S rRNA (bridge B1a) and protein L5 of the 50S subunit (bridge B1b), connecting the 2 subunits; these bridges are implicated in subunit movement. Contacts the tRNAs in the A and P-sites.</text>
</comment>
<comment type="subunit">
    <text evidence="1">Part of the 30S ribosomal subunit. Forms a loose heterodimer with protein S19. Forms two bridges to the 50S subunit in the 70S ribosome.</text>
</comment>
<comment type="similarity">
    <text evidence="1">Belongs to the universal ribosomal protein uS13 family.</text>
</comment>
<accession>Q2P006</accession>
<keyword id="KW-0687">Ribonucleoprotein</keyword>
<keyword id="KW-0689">Ribosomal protein</keyword>
<keyword id="KW-0694">RNA-binding</keyword>
<keyword id="KW-0699">rRNA-binding</keyword>
<keyword id="KW-0820">tRNA-binding</keyword>
<organism>
    <name type="scientific">Xanthomonas oryzae pv. oryzae (strain MAFF 311018)</name>
    <dbReference type="NCBI Taxonomy" id="342109"/>
    <lineage>
        <taxon>Bacteria</taxon>
        <taxon>Pseudomonadati</taxon>
        <taxon>Pseudomonadota</taxon>
        <taxon>Gammaproteobacteria</taxon>
        <taxon>Lysobacterales</taxon>
        <taxon>Lysobacteraceae</taxon>
        <taxon>Xanthomonas</taxon>
    </lineage>
</organism>